<protein>
    <recommendedName>
        <fullName evidence="1">Cell division suppressor protein YneA</fullName>
    </recommendedName>
</protein>
<reference key="1">
    <citation type="journal article" date="2011" name="J. Bacteriol.">
        <title>Genome sequence of lineage III Listeria monocytogenes strain HCC23.</title>
        <authorList>
            <person name="Steele C.L."/>
            <person name="Donaldson J.R."/>
            <person name="Paul D."/>
            <person name="Banes M.M."/>
            <person name="Arick T."/>
            <person name="Bridges S.M."/>
            <person name="Lawrence M.L."/>
        </authorList>
    </citation>
    <scope>NUCLEOTIDE SEQUENCE [LARGE SCALE GENOMIC DNA]</scope>
    <source>
        <strain>HCC23</strain>
    </source>
</reference>
<proteinExistence type="inferred from homology"/>
<evidence type="ECO:0000255" key="1">
    <source>
        <dbReference type="HAMAP-Rule" id="MF_02014"/>
    </source>
</evidence>
<evidence type="ECO:0000255" key="2">
    <source>
        <dbReference type="PROSITE-ProRule" id="PRU01118"/>
    </source>
</evidence>
<feature type="chain" id="PRO_1000189526" description="Cell division suppressor protein YneA">
    <location>
        <begin position="1"/>
        <end position="109"/>
    </location>
</feature>
<feature type="domain" description="LysM" evidence="2">
    <location>
        <begin position="39"/>
        <end position="90"/>
    </location>
</feature>
<accession>B8DG24</accession>
<sequence length="109" mass="11926">MTMKLIWDKFYVSIIFVLTCIVLGIILMCTVVGGGNDYSEVNVSEGDSLWALADQYAGKSDMAKADFVSWVEKENNLADGHVEAGESVVIPVHKTKLIKSDSTIQLANQ</sequence>
<dbReference type="EMBL" id="CP001175">
    <property type="protein sequence ID" value="ACK39614.1"/>
    <property type="molecule type" value="Genomic_DNA"/>
</dbReference>
<dbReference type="RefSeq" id="WP_003734518.1">
    <property type="nucleotide sequence ID" value="NC_011660.1"/>
</dbReference>
<dbReference type="SMR" id="B8DG24"/>
<dbReference type="KEGG" id="lmh:LMHCC_1267"/>
<dbReference type="HOGENOM" id="CLU_136034_4_0_9"/>
<dbReference type="GO" id="GO:0005737">
    <property type="term" value="C:cytoplasm"/>
    <property type="evidence" value="ECO:0007669"/>
    <property type="project" value="UniProtKB-SubCell"/>
</dbReference>
<dbReference type="GO" id="GO:0000917">
    <property type="term" value="P:division septum assembly"/>
    <property type="evidence" value="ECO:0007669"/>
    <property type="project" value="UniProtKB-KW"/>
</dbReference>
<dbReference type="GO" id="GO:0006281">
    <property type="term" value="P:DNA repair"/>
    <property type="evidence" value="ECO:0007669"/>
    <property type="project" value="UniProtKB-KW"/>
</dbReference>
<dbReference type="GO" id="GO:0051782">
    <property type="term" value="P:negative regulation of cell division"/>
    <property type="evidence" value="ECO:0007669"/>
    <property type="project" value="UniProtKB-UniRule"/>
</dbReference>
<dbReference type="GO" id="GO:0009432">
    <property type="term" value="P:SOS response"/>
    <property type="evidence" value="ECO:0007669"/>
    <property type="project" value="UniProtKB-UniRule"/>
</dbReference>
<dbReference type="Gene3D" id="3.10.350.10">
    <property type="entry name" value="LysM domain"/>
    <property type="match status" value="1"/>
</dbReference>
<dbReference type="HAMAP" id="MF_02014">
    <property type="entry name" value="YneA"/>
    <property type="match status" value="1"/>
</dbReference>
<dbReference type="InterPro" id="IPR022887">
    <property type="entry name" value="Cell_div_suppressor_YneA"/>
</dbReference>
<dbReference type="InterPro" id="IPR018392">
    <property type="entry name" value="LysM_dom"/>
</dbReference>
<dbReference type="InterPro" id="IPR036779">
    <property type="entry name" value="LysM_dom_sf"/>
</dbReference>
<dbReference type="NCBIfam" id="NF010723">
    <property type="entry name" value="PRK14125.1"/>
    <property type="match status" value="1"/>
</dbReference>
<dbReference type="PROSITE" id="PS51782">
    <property type="entry name" value="LYSM"/>
    <property type="match status" value="1"/>
</dbReference>
<comment type="function">
    <text evidence="1">Inhibits cell division during the SOS response. Affects a later stage of the cell division protein assembly, after the assembly of the Z ring, by probably suppressing recruitment of FtsL and/or DivIC to the division machinery.</text>
</comment>
<comment type="subcellular location">
    <subcellularLocation>
        <location evidence="1">Cytoplasm</location>
    </subcellularLocation>
</comment>
<comment type="similarity">
    <text evidence="1">Belongs to the YneA family.</text>
</comment>
<organism>
    <name type="scientific">Listeria monocytogenes serotype 4a (strain HCC23)</name>
    <dbReference type="NCBI Taxonomy" id="552536"/>
    <lineage>
        <taxon>Bacteria</taxon>
        <taxon>Bacillati</taxon>
        <taxon>Bacillota</taxon>
        <taxon>Bacilli</taxon>
        <taxon>Bacillales</taxon>
        <taxon>Listeriaceae</taxon>
        <taxon>Listeria</taxon>
    </lineage>
</organism>
<name>YNEA_LISMH</name>
<gene>
    <name evidence="1" type="primary">yneA</name>
    <name type="ordered locus">LMHCC_1267</name>
</gene>
<keyword id="KW-0131">Cell cycle</keyword>
<keyword id="KW-0132">Cell division</keyword>
<keyword id="KW-0963">Cytoplasm</keyword>
<keyword id="KW-0227">DNA damage</keyword>
<keyword id="KW-0234">DNA repair</keyword>
<keyword id="KW-0717">Septation</keyword>
<keyword id="KW-0742">SOS response</keyword>